<protein>
    <recommendedName>
        <fullName evidence="6">ADP-ribosyl cyclase/cyclic ADP-ribose hydrolase</fullName>
        <ecNumber evidence="1 3">3.2.2.-</ecNumber>
    </recommendedName>
    <alternativeName>
        <fullName>2'-phospho-ADP-ribosyl cyclase</fullName>
    </alternativeName>
    <alternativeName>
        <fullName>2'-phospho-ADP-ribosyl cyclase/2'-phospho-cyclic-ADP-ribose transferase</fullName>
        <ecNumber evidence="2 5">2.4.99.20</ecNumber>
    </alternativeName>
    <alternativeName>
        <fullName>2'-phospho-cyclic-ADP-ribose transferase</fullName>
    </alternativeName>
    <alternativeName>
        <fullName evidence="6">ADP-ribosyl cyclase</fullName>
        <shortName>ADPRC</shortName>
        <shortName>ADRC</shortName>
    </alternativeName>
    <alternativeName>
        <fullName>NAD glycohydrolase</fullName>
    </alternativeName>
    <alternativeName>
        <fullName>NAD(+) nucleosidase</fullName>
        <shortName evidence="7">NADase</shortName>
    </alternativeName>
</protein>
<keyword id="KW-0002">3D-structure</keyword>
<keyword id="KW-0106">Calcium</keyword>
<keyword id="KW-0968">Cytoplasmic vesicle</keyword>
<keyword id="KW-0903">Direct protein sequencing</keyword>
<keyword id="KW-1015">Disulfide bond</keyword>
<keyword id="KW-0278">Fertilization</keyword>
<keyword id="KW-0378">Hydrolase</keyword>
<keyword id="KW-0520">NAD</keyword>
<keyword id="KW-0521">NADP</keyword>
<keyword id="KW-0597">Phosphoprotein</keyword>
<keyword id="KW-0732">Signal</keyword>
<keyword id="KW-0808">Transferase</keyword>
<feature type="signal peptide" evidence="1 4">
    <location>
        <begin position="1"/>
        <end position="24"/>
    </location>
</feature>
<feature type="chain" id="PRO_0000004030" description="ADP-ribosyl cyclase/cyclic ADP-ribose hydrolase">
    <location>
        <begin position="25"/>
        <end position="282"/>
    </location>
</feature>
<feature type="disulfide bond">
    <location>
        <begin position="39"/>
        <end position="58"/>
    </location>
</feature>
<feature type="disulfide bond">
    <location>
        <begin position="75"/>
        <end position="155"/>
    </location>
</feature>
<feature type="disulfide bond">
    <location>
        <begin position="136"/>
        <end position="149"/>
    </location>
</feature>
<feature type="disulfide bond">
    <location>
        <begin position="230"/>
        <end position="251"/>
    </location>
</feature>
<feature type="disulfide bond">
    <location>
        <begin position="263"/>
        <end position="272"/>
    </location>
</feature>
<feature type="helix" evidence="12">
    <location>
        <begin position="31"/>
        <end position="45"/>
    </location>
</feature>
<feature type="turn" evidence="12">
    <location>
        <begin position="48"/>
        <end position="50"/>
    </location>
</feature>
<feature type="helix" evidence="12">
    <location>
        <begin position="58"/>
        <end position="69"/>
    </location>
</feature>
<feature type="helix" evidence="12">
    <location>
        <begin position="74"/>
        <end position="76"/>
    </location>
</feature>
<feature type="turn" evidence="12">
    <location>
        <begin position="79"/>
        <end position="82"/>
    </location>
</feature>
<feature type="helix" evidence="12">
    <location>
        <begin position="83"/>
        <end position="89"/>
    </location>
</feature>
<feature type="turn" evidence="11">
    <location>
        <begin position="95"/>
        <end position="97"/>
    </location>
</feature>
<feature type="strand" evidence="12">
    <location>
        <begin position="98"/>
        <end position="103"/>
    </location>
</feature>
<feature type="helix" evidence="12">
    <location>
        <begin position="105"/>
        <end position="112"/>
    </location>
</feature>
<feature type="turn" evidence="12">
    <location>
        <begin position="113"/>
        <end position="116"/>
    </location>
</feature>
<feature type="helix" evidence="12">
    <location>
        <begin position="121"/>
        <end position="123"/>
    </location>
</feature>
<feature type="helix" evidence="12">
    <location>
        <begin position="125"/>
        <end position="130"/>
    </location>
</feature>
<feature type="helix" evidence="12">
    <location>
        <begin position="152"/>
        <end position="154"/>
    </location>
</feature>
<feature type="helix" evidence="12">
    <location>
        <begin position="157"/>
        <end position="160"/>
    </location>
</feature>
<feature type="helix" evidence="12">
    <location>
        <begin position="162"/>
        <end position="174"/>
    </location>
</feature>
<feature type="strand" evidence="12">
    <location>
        <begin position="177"/>
        <end position="186"/>
    </location>
</feature>
<feature type="strand" evidence="12">
    <location>
        <begin position="188"/>
        <end position="190"/>
    </location>
</feature>
<feature type="strand" evidence="11">
    <location>
        <begin position="195"/>
        <end position="197"/>
    </location>
</feature>
<feature type="helix" evidence="12">
    <location>
        <begin position="198"/>
        <end position="201"/>
    </location>
</feature>
<feature type="helix" evidence="12">
    <location>
        <begin position="204"/>
        <end position="206"/>
    </location>
</feature>
<feature type="strand" evidence="12">
    <location>
        <begin position="211"/>
        <end position="219"/>
    </location>
</feature>
<feature type="strand" evidence="11">
    <location>
        <begin position="222"/>
        <end position="224"/>
    </location>
</feature>
<feature type="strand" evidence="13">
    <location>
        <begin position="230"/>
        <end position="232"/>
    </location>
</feature>
<feature type="helix" evidence="12">
    <location>
        <begin position="233"/>
        <end position="244"/>
    </location>
</feature>
<feature type="strand" evidence="12">
    <location>
        <begin position="248"/>
        <end position="254"/>
    </location>
</feature>
<feature type="helix" evidence="12">
    <location>
        <begin position="256"/>
        <end position="264"/>
    </location>
</feature>
<feature type="helix" evidence="12">
    <location>
        <begin position="270"/>
        <end position="272"/>
    </location>
</feature>
<name>NADA_APLCA</name>
<organism>
    <name type="scientific">Aplysia californica</name>
    <name type="common">California sea hare</name>
    <dbReference type="NCBI Taxonomy" id="6500"/>
    <lineage>
        <taxon>Eukaryota</taxon>
        <taxon>Metazoa</taxon>
        <taxon>Spiralia</taxon>
        <taxon>Lophotrochozoa</taxon>
        <taxon>Mollusca</taxon>
        <taxon>Gastropoda</taxon>
        <taxon>Heterobranchia</taxon>
        <taxon>Euthyneura</taxon>
        <taxon>Tectipleura</taxon>
        <taxon>Aplysiida</taxon>
        <taxon>Aplysioidea</taxon>
        <taxon>Aplysiidae</taxon>
        <taxon>Aplysia</taxon>
    </lineage>
</organism>
<sequence length="282" mass="31899">MSPVAIIACVCLAVTLTSISPSEAIVPTRELENVFLGRCKDYEITRYLDILPRVRSDCSALWKDFFKAFSFKNPCDLDLGSYKDFFTSAQQQLPKNKVMFWSGVYDEAHDYANTGRKYITLEDTLPGYMLNSLVWCGQRANPGFNEKVCPDFKTCPVQARESFWGMASSSYAHSAEGEVTYMVDGSNPKVPAYRPDSFFGKYELPNLTNKVTRVKVIVLHRLGEKIIEKCGAGSLLDLEKLVKAKHFAFDCVENPRAVLFLLCSDNPNARECRLAKRFYRIA</sequence>
<evidence type="ECO:0000269" key="1">
    <source>
    </source>
</evidence>
<evidence type="ECO:0000269" key="2">
    <source>
    </source>
</evidence>
<evidence type="ECO:0000269" key="3">
    <source>
    </source>
</evidence>
<evidence type="ECO:0000269" key="4">
    <source>
    </source>
</evidence>
<evidence type="ECO:0000269" key="5">
    <source>
    </source>
</evidence>
<evidence type="ECO:0000303" key="6">
    <source>
    </source>
</evidence>
<evidence type="ECO:0000303" key="7">
    <source>
    </source>
</evidence>
<evidence type="ECO:0000305" key="8"/>
<evidence type="ECO:0000305" key="9">
    <source>
    </source>
</evidence>
<evidence type="ECO:0000305" key="10">
    <source>
    </source>
</evidence>
<evidence type="ECO:0007829" key="11">
    <source>
        <dbReference type="PDB" id="1LBE"/>
    </source>
</evidence>
<evidence type="ECO:0007829" key="12">
    <source>
        <dbReference type="PDB" id="1R12"/>
    </source>
</evidence>
<evidence type="ECO:0007829" key="13">
    <source>
        <dbReference type="PDB" id="3I9J"/>
    </source>
</evidence>
<reference key="1">
    <citation type="journal article" date="1991" name="Cell Regul.">
        <title>Primary structure of a molluscan egg-specific NADase, a second-messenger enzyme.</title>
        <authorList>
            <person name="Glick D.L."/>
            <person name="Hellmich M.R."/>
            <person name="Beushausen S."/>
            <person name="Tempst P.J."/>
            <person name="Bayley H."/>
            <person name="Strumwasser F."/>
        </authorList>
    </citation>
    <scope>NUCLEOTIDE SEQUENCE [MRNA]</scope>
    <scope>PROTEIN SEQUENCE OF 25-72; 84-95; 98-114; 190-209 AND 216-225</scope>
    <scope>TISSUE SPECIFICITY</scope>
    <source>
        <tissue>Ovotestis</tissue>
    </source>
</reference>
<reference key="2">
    <citation type="journal article" date="2000" name="Biochem. J.">
        <title>Unifying mechanism for Aplysia ADP-ribosyl cyclase and CD38/NAD(+) glycohydrolases.</title>
        <authorList>
            <person name="Cakir-Kiefer C."/>
            <person name="Muller-Steffner H."/>
            <person name="Schuber F."/>
        </authorList>
    </citation>
    <scope>PROTEIN SEQUENCE OF 25-42</scope>
    <scope>FUNCTION</scope>
    <scope>CATALYTIC ACTIVITY</scope>
    <scope>BIOPHYSICOCHEMICAL PROPERTIES</scope>
    <scope>MASS SPECTROMETRY</scope>
    <source>
        <tissue>Ovotestis</tissue>
    </source>
</reference>
<reference key="3">
    <citation type="journal article" date="1991" name="Cell Regul.">
        <title>Purification and characterization of a molluscan egg-specific NADase, a second-messenger enzyme.</title>
        <authorList>
            <person name="Hellmich M.R."/>
            <person name="Strumwasser F."/>
        </authorList>
    </citation>
    <scope>FUNCTION</scope>
    <scope>CATALYTIC ACTIVITY</scope>
    <scope>ACTIVITY REGULATION</scope>
    <scope>SUBCELLULAR LOCATION</scope>
    <scope>TISSUE SPECIFICITY</scope>
    <source>
        <tissue>Ovotestis</tissue>
    </source>
</reference>
<reference key="4">
    <citation type="journal article" date="1992" name="Trends Biochem. Sci.">
        <title>Similarities in amino acid sequences of Aplysia ADP-ribosyl cyclase and human lymphocyte antigen CD38.</title>
        <authorList>
            <person name="States D.J."/>
            <person name="Walseth T.F."/>
            <person name="Lee H.C."/>
        </authorList>
    </citation>
    <scope>SIMILARITY TO CD38</scope>
</reference>
<reference key="5">
    <citation type="journal article" date="2002" name="Biochem. J.">
        <title>CD38 is the major enzyme responsible for synthesis of nicotinic acid-adenine dinucleotide phosphate in mammalian tissues.</title>
        <authorList>
            <person name="Chini E.N."/>
            <person name="Chini C.C."/>
            <person name="Kato I."/>
            <person name="Takasawa S."/>
            <person name="Okamoto H."/>
        </authorList>
    </citation>
    <scope>FUNCTION IN SYNTHESIS OF NICOTINIC ACID-ADENINE DINUCLEOTIDE PHOSPHATE</scope>
</reference>
<reference key="6">
    <citation type="journal article" date="2006" name="Biochem. Biophys. Res. Commun.">
        <title>NAADP+ synthesis from cADPRP and nicotinic acid by ADP-ribosyl cyclases.</title>
        <authorList>
            <person name="Moreschi I."/>
            <person name="Bruzzone S."/>
            <person name="Melone L."/>
            <person name="De Flora A."/>
            <person name="Zocchi E."/>
        </authorList>
    </citation>
    <scope>FUNCTION</scope>
    <scope>CATALYTIC ACTIVITY</scope>
    <scope>BIOPHYSICOCHEMICAL PROPERTIES</scope>
</reference>
<reference key="7">
    <citation type="journal article" date="1996" name="Nat. Struct. Biol.">
        <title>Crystal structure of Aplysia ADP ribosyl cyclase, a homologue of the bifunctional ectozyme CD38.</title>
        <authorList>
            <person name="Prasad G.S."/>
            <person name="McRee D.E."/>
            <person name="Stura E.A."/>
            <person name="Levitt D.G."/>
            <person name="Lee H.C."/>
            <person name="Stout C.D."/>
        </authorList>
    </citation>
    <scope>X-RAY CRYSTALLOGRAPHY (2.4 ANGSTROMS)</scope>
</reference>
<dbReference type="EC" id="3.2.2.-" evidence="1 3"/>
<dbReference type="EC" id="2.4.99.20" evidence="2 5"/>
<dbReference type="EMBL" id="M85206">
    <property type="protein sequence ID" value="AAA65698.1"/>
    <property type="molecule type" value="mRNA"/>
</dbReference>
<dbReference type="PIR" id="S27769">
    <property type="entry name" value="S27769"/>
</dbReference>
<dbReference type="RefSeq" id="NP_001191476.1">
    <property type="nucleotide sequence ID" value="NM_001204547.1"/>
</dbReference>
<dbReference type="PDB" id="1LBE">
    <property type="method" value="X-ray"/>
    <property type="resolution" value="2.40 A"/>
    <property type="chains" value="A/B=25-282"/>
</dbReference>
<dbReference type="PDB" id="1R0S">
    <property type="method" value="X-ray"/>
    <property type="resolution" value="2.00 A"/>
    <property type="chains" value="A/B=25-282"/>
</dbReference>
<dbReference type="PDB" id="1R12">
    <property type="method" value="X-ray"/>
    <property type="resolution" value="1.70 A"/>
    <property type="chains" value="A/B=25-282"/>
</dbReference>
<dbReference type="PDB" id="1R15">
    <property type="method" value="X-ray"/>
    <property type="resolution" value="2.40 A"/>
    <property type="chains" value="A/B/C/D/E/F/G/H=25-282"/>
</dbReference>
<dbReference type="PDB" id="1R16">
    <property type="method" value="X-ray"/>
    <property type="resolution" value="2.00 A"/>
    <property type="chains" value="A/B=25-282"/>
</dbReference>
<dbReference type="PDB" id="3I9J">
    <property type="method" value="X-ray"/>
    <property type="resolution" value="2.18 A"/>
    <property type="chains" value="A/B=25-282"/>
</dbReference>
<dbReference type="PDB" id="3I9K">
    <property type="method" value="X-ray"/>
    <property type="resolution" value="1.83 A"/>
    <property type="chains" value="A/B=25-282"/>
</dbReference>
<dbReference type="PDB" id="3I9L">
    <property type="method" value="X-ray"/>
    <property type="resolution" value="1.75 A"/>
    <property type="chains" value="A/B=25-282"/>
</dbReference>
<dbReference type="PDB" id="3I9O">
    <property type="method" value="X-ray"/>
    <property type="resolution" value="3.00 A"/>
    <property type="chains" value="A/B=25-282"/>
</dbReference>
<dbReference type="PDB" id="3ZWM">
    <property type="method" value="X-ray"/>
    <property type="resolution" value="2.50 A"/>
    <property type="chains" value="A/B/C/D/E/F/G/H=25-282"/>
</dbReference>
<dbReference type="PDB" id="3ZWN">
    <property type="method" value="X-ray"/>
    <property type="resolution" value="1.80 A"/>
    <property type="chains" value="A/B=25-282"/>
</dbReference>
<dbReference type="PDB" id="3ZWO">
    <property type="method" value="X-ray"/>
    <property type="resolution" value="2.00 A"/>
    <property type="chains" value="A/B/C/D/E/F/G/H=24-282"/>
</dbReference>
<dbReference type="PDB" id="3ZWP">
    <property type="method" value="X-ray"/>
    <property type="resolution" value="2.11 A"/>
    <property type="chains" value="A/B/C/D/E/F/G/H=25-282"/>
</dbReference>
<dbReference type="PDB" id="3ZWV">
    <property type="method" value="X-ray"/>
    <property type="resolution" value="2.30 A"/>
    <property type="chains" value="A/B/C/D/E/F/G/H=25-282"/>
</dbReference>
<dbReference type="PDB" id="3ZWW">
    <property type="method" value="X-ray"/>
    <property type="resolution" value="2.30 A"/>
    <property type="chains" value="A/B/C/D/E/F/G/H=25-282"/>
</dbReference>
<dbReference type="PDB" id="3ZWX">
    <property type="method" value="X-ray"/>
    <property type="resolution" value="2.60 A"/>
    <property type="chains" value="A/B/C/D/E/F/G/H=25-282"/>
</dbReference>
<dbReference type="PDB" id="3ZWY">
    <property type="method" value="X-ray"/>
    <property type="resolution" value="2.40 A"/>
    <property type="chains" value="A/B/C/D/E/F/G/H=25-282"/>
</dbReference>
<dbReference type="PDBsum" id="1LBE"/>
<dbReference type="PDBsum" id="1R0S"/>
<dbReference type="PDBsum" id="1R12"/>
<dbReference type="PDBsum" id="1R15"/>
<dbReference type="PDBsum" id="1R16"/>
<dbReference type="PDBsum" id="3I9J"/>
<dbReference type="PDBsum" id="3I9K"/>
<dbReference type="PDBsum" id="3I9L"/>
<dbReference type="PDBsum" id="3I9O"/>
<dbReference type="PDBsum" id="3ZWM"/>
<dbReference type="PDBsum" id="3ZWN"/>
<dbReference type="PDBsum" id="3ZWO"/>
<dbReference type="PDBsum" id="3ZWP"/>
<dbReference type="PDBsum" id="3ZWV"/>
<dbReference type="PDBsum" id="3ZWW"/>
<dbReference type="PDBsum" id="3ZWX"/>
<dbReference type="PDBsum" id="3ZWY"/>
<dbReference type="SMR" id="P29241"/>
<dbReference type="EnsemblMetazoa" id="NM_001204547.1">
    <property type="protein sequence ID" value="NP_001191476.1"/>
    <property type="gene ID" value="GeneID_100533234"/>
</dbReference>
<dbReference type="GeneID" id="100533234"/>
<dbReference type="CTD" id="100533234"/>
<dbReference type="OrthoDB" id="10028716at2759"/>
<dbReference type="BRENDA" id="2.4.99.20">
    <property type="organism ID" value="390"/>
</dbReference>
<dbReference type="EvolutionaryTrace" id="P29241"/>
<dbReference type="Proteomes" id="UP000694888">
    <property type="component" value="Unplaced"/>
</dbReference>
<dbReference type="GO" id="GO:0031410">
    <property type="term" value="C:cytoplasmic vesicle"/>
    <property type="evidence" value="ECO:0007669"/>
    <property type="project" value="UniProtKB-KW"/>
</dbReference>
<dbReference type="GO" id="GO:0005886">
    <property type="term" value="C:plasma membrane"/>
    <property type="evidence" value="ECO:0007669"/>
    <property type="project" value="TreeGrafter"/>
</dbReference>
<dbReference type="GO" id="GO:0061809">
    <property type="term" value="F:NAD+ nucleosidase activity, cyclic ADP-ribose generating"/>
    <property type="evidence" value="ECO:0007669"/>
    <property type="project" value="UniProtKB-EC"/>
</dbReference>
<dbReference type="GO" id="GO:0016849">
    <property type="term" value="F:phosphorus-oxygen lyase activity"/>
    <property type="evidence" value="ECO:0007669"/>
    <property type="project" value="TreeGrafter"/>
</dbReference>
<dbReference type="GO" id="GO:0016740">
    <property type="term" value="F:transferase activity"/>
    <property type="evidence" value="ECO:0007669"/>
    <property type="project" value="UniProtKB-KW"/>
</dbReference>
<dbReference type="GO" id="GO:0030890">
    <property type="term" value="P:positive regulation of B cell proliferation"/>
    <property type="evidence" value="ECO:0007669"/>
    <property type="project" value="TreeGrafter"/>
</dbReference>
<dbReference type="GO" id="GO:0007338">
    <property type="term" value="P:single fertilization"/>
    <property type="evidence" value="ECO:0007669"/>
    <property type="project" value="UniProtKB-KW"/>
</dbReference>
<dbReference type="CDD" id="cd04759">
    <property type="entry name" value="Rib_hydrolase"/>
    <property type="match status" value="1"/>
</dbReference>
<dbReference type="Gene3D" id="1.20.82.10">
    <property type="entry name" value="ADP Ribosyl Cyclase, Chain A, domain 1"/>
    <property type="match status" value="1"/>
</dbReference>
<dbReference type="Gene3D" id="3.40.50.720">
    <property type="entry name" value="NAD(P)-binding Rossmann-like Domain"/>
    <property type="match status" value="1"/>
</dbReference>
<dbReference type="InterPro" id="IPR003193">
    <property type="entry name" value="ADP-ribosyl_cyclase"/>
</dbReference>
<dbReference type="PANTHER" id="PTHR10912">
    <property type="entry name" value="ADP-RIBOSYL CYCLASE"/>
    <property type="match status" value="1"/>
</dbReference>
<dbReference type="PANTHER" id="PTHR10912:SF7">
    <property type="entry name" value="ADP-RIBOSYL CYCLASE_CYCLIC ADP-RIBOSE HYDROLASE"/>
    <property type="match status" value="1"/>
</dbReference>
<dbReference type="Pfam" id="PF02267">
    <property type="entry name" value="Rib_hydrolayse"/>
    <property type="match status" value="1"/>
</dbReference>
<dbReference type="SUPFAM" id="SSF52309">
    <property type="entry name" value="N-(deoxy)ribosyltransferase-like"/>
    <property type="match status" value="1"/>
</dbReference>
<accession>P29241</accession>
<comment type="function">
    <text evidence="1 2 3 5">Synthesizes cyclic ADP-ribose (cADPR), a second messenger for calcium mobilization from endoplasmic reticulum; ADP-ribose is a minor product (PubMed:10861229, PubMed:1650254). Synthesizes the Ca(2+) mobilizer nicotinate-adenine dinucleotide phosphate from 2'-phospho-cADPR and nicotinic acid as well as from NADP(+) and nicotinic acid; with NADP(+) as substrate preferentially catalyzes NADP(+) hydrolysis rather than NAADP(+) synthesis, about 70-fold better at pH 7.4 (PubMed:11829748, PubMed:16690024). Has cADPR hydrolase activity at very high enzyme concentrations, which is probably not physiological (PubMed:10861229). The conversion of NAD(+) into ADP-ribose is also only observed at high enzyme concentrations and results from the hydrolysis of cADP-ribose (PubMed:10861229).</text>
</comment>
<comment type="catalytic activity">
    <reaction evidence="1 3">
        <text>NAD(+) = cyclic ADP-beta-D-ribose + nicotinamide + H(+)</text>
        <dbReference type="Rhea" id="RHEA:38611"/>
        <dbReference type="ChEBI" id="CHEBI:15378"/>
        <dbReference type="ChEBI" id="CHEBI:17154"/>
        <dbReference type="ChEBI" id="CHEBI:57540"/>
        <dbReference type="ChEBI" id="CHEBI:73672"/>
    </reaction>
    <physiologicalReaction direction="left-to-right" evidence="1 3">
        <dbReference type="Rhea" id="RHEA:38612"/>
    </physiologicalReaction>
</comment>
<comment type="catalytic activity">
    <reaction evidence="5">
        <text>nicotinate + NADP(+) = nicotinate-adenine dinucleotide phosphate + nicotinamide</text>
        <dbReference type="Rhea" id="RHEA:38599"/>
        <dbReference type="ChEBI" id="CHEBI:17154"/>
        <dbReference type="ChEBI" id="CHEBI:32544"/>
        <dbReference type="ChEBI" id="CHEBI:58349"/>
        <dbReference type="ChEBI" id="CHEBI:75967"/>
        <dbReference type="EC" id="2.4.99.20"/>
    </reaction>
</comment>
<comment type="catalytic activity">
    <reaction evidence="5">
        <text>2'-phospho-cyclic ADP-ribose + nicotinate = nicotinate-adenine dinucleotide phosphate</text>
        <dbReference type="Rhea" id="RHEA:38607"/>
        <dbReference type="ChEBI" id="CHEBI:32544"/>
        <dbReference type="ChEBI" id="CHEBI:75967"/>
        <dbReference type="ChEBI" id="CHEBI:75970"/>
    </reaction>
    <physiologicalReaction direction="left-to-right" evidence="5">
        <dbReference type="Rhea" id="RHEA:38608"/>
    </physiologicalReaction>
</comment>
<comment type="activity regulation">
    <text evidence="9">Activity is presumably regulated by its sequestration in vesicles before egg fertilization. After fertilization and upon NADase release, it could then be regulated via its potential phosphorylation sites.</text>
</comment>
<comment type="biophysicochemical properties">
    <kinetics>
        <KM evidence="1">1.04 mM for cADPR (hydrolysis of cADPR)</KM>
        <KM evidence="1">4.6 uM for NAD(+) (synthesis of cADPR)</KM>
        <Vmax evidence="1">3.34 umol/min/mg enzyme (hydrolysis of cADPR)</Vmax>
        <Vmax evidence="1">465.0 umol/min/mg enzyme (synthesis of cADPR)</Vmax>
    </kinetics>
    <phDependence>
        <text evidence="5">Optimum pH for NAADP(+) production is 5.0 from either 2'-phospho-cyclic ADP-ribose or NADP(+), activity is much higher at pH 5.0 than 7.4.</text>
    </phDependence>
</comment>
<comment type="subcellular location">
    <subcellularLocation>
        <location evidence="3">Cytoplasmic vesicle</location>
    </subcellularLocation>
    <text>Localized to vesicles or granules within ova of all stages.</text>
</comment>
<comment type="tissue specificity">
    <text evidence="4">Immature occoyctes (PubMed:1650255). Oocytes.</text>
</comment>
<comment type="developmental stage">
    <text>Immature eggs have higher levels of NADase transcripts than the mature ones.</text>
</comment>
<comment type="PTM">
    <text evidence="9 10">Has different isoforms which may be the result of different amounts of phosphorylation.</text>
</comment>
<comment type="mass spectrometry" mass="28694.9" error="1.3" method="Electrospray" evidence="1">
    <text>For mature protein, the difference from the calculated weight (29539.8 Da)may be due to isoforms.</text>
</comment>
<comment type="similarity">
    <text evidence="8">Belongs to the ADP-ribosyl cyclase family.</text>
</comment>
<proteinExistence type="evidence at protein level"/>